<evidence type="ECO:0000255" key="1">
    <source>
        <dbReference type="HAMAP-Rule" id="MF_00685"/>
    </source>
</evidence>
<evidence type="ECO:0000256" key="2">
    <source>
        <dbReference type="SAM" id="MobiDB-lite"/>
    </source>
</evidence>
<sequence length="705" mass="80006">MTFPLPLDHEHLQKLVTADLVRPDHLLGAHPTTEHGVQGVRFAVWAPNAQHVSVVGDFNDWNGFDHPLQRLDFGFWGAFVPAAQPGQRYKFRVTGAGGQTVDKTDPYGTFFEVRPNNASIIWQQDFEWTDAGWLEQRARRGQALEDPISIYECHVGSWARRDDGWFLNYRDLAHRLGEYVTYMGYTHVELLGVMEHPFDGSWGYQVTGYYAPTSRLGSPEDFKYLVNHLHSLGIGVLLDWVPGHFPTDEFALAHFDGSPLYEYADPRKGYHYDWNTYIFDYGRNEVVMFLIGSALKWVQDYHVDGLRVDAVASMLYLDFSRTEWVPNIYGGRENLEAIAFLKRLNEVAHHMAPGCLMIAEESTSFPGVTTPTPEGLGFDYKWAMGWMNDSLAYFEQDPIYRKYDHHKLTFFNVYRTSENYVLAISHDEVVHLKKPMVLKHPGDWYAQRADYRAFLAMMWTTPGKKLLFMGQDFAQGSEWNHDAPLPWFHADQPDHRGVMNLVRRLNELYRERPDWHTGDAREEGMAWISADDTDNSVYAYARRDTYSGAWSLVIANLTPVYREDYVIGVPQGGEYRVLLSTDDGEFGGFGTQQPDLSARDEAAHGQAHALHLNLPPSSVLVLEPVAAAPVKGLVSRQELTPELREVARQSAQAVQVERAADPRPNEQQRLVAETPAHEGGRSAPADAAESAEQKPDDEQKGGKKA</sequence>
<gene>
    <name evidence="1" type="primary">glgB</name>
    <name type="ordered locus">DR_1848</name>
</gene>
<accession>Q9RTB7</accession>
<reference key="1">
    <citation type="journal article" date="1999" name="Science">
        <title>Genome sequence of the radioresistant bacterium Deinococcus radiodurans R1.</title>
        <authorList>
            <person name="White O."/>
            <person name="Eisen J.A."/>
            <person name="Heidelberg J.F."/>
            <person name="Hickey E.K."/>
            <person name="Peterson J.D."/>
            <person name="Dodson R.J."/>
            <person name="Haft D.H."/>
            <person name="Gwinn M.L."/>
            <person name="Nelson W.C."/>
            <person name="Richardson D.L."/>
            <person name="Moffat K.S."/>
            <person name="Qin H."/>
            <person name="Jiang L."/>
            <person name="Pamphile W."/>
            <person name="Crosby M."/>
            <person name="Shen M."/>
            <person name="Vamathevan J.J."/>
            <person name="Lam P."/>
            <person name="McDonald L.A."/>
            <person name="Utterback T.R."/>
            <person name="Zalewski C."/>
            <person name="Makarova K.S."/>
            <person name="Aravind L."/>
            <person name="Daly M.J."/>
            <person name="Minton K.W."/>
            <person name="Fleischmann R.D."/>
            <person name="Ketchum K.A."/>
            <person name="Nelson K.E."/>
            <person name="Salzberg S.L."/>
            <person name="Smith H.O."/>
            <person name="Venter J.C."/>
            <person name="Fraser C.M."/>
        </authorList>
    </citation>
    <scope>NUCLEOTIDE SEQUENCE [LARGE SCALE GENOMIC DNA]</scope>
    <source>
        <strain>ATCC 13939 / DSM 20539 / JCM 16871 / CCUG 27074 / LMG 4051 / NBRC 15346 / NCIMB 9279 / VKM B-1422 / R1</strain>
    </source>
</reference>
<comment type="function">
    <text evidence="1">Catalyzes the formation of the alpha-1,6-glucosidic linkages in glycogen by scission of a 1,4-alpha-linked oligosaccharide from growing alpha-1,4-glucan chains and the subsequent attachment of the oligosaccharide to the alpha-1,6 position.</text>
</comment>
<comment type="catalytic activity">
    <reaction evidence="1">
        <text>Transfers a segment of a (1-&gt;4)-alpha-D-glucan chain to a primary hydroxy group in a similar glucan chain.</text>
        <dbReference type="EC" id="2.4.1.18"/>
    </reaction>
</comment>
<comment type="pathway">
    <text evidence="1">Glycan biosynthesis; glycogen biosynthesis.</text>
</comment>
<comment type="subunit">
    <text evidence="1">Monomer.</text>
</comment>
<comment type="similarity">
    <text evidence="1">Belongs to the glycosyl hydrolase 13 family. GlgB subfamily.</text>
</comment>
<name>GLGB_DEIRA</name>
<proteinExistence type="inferred from homology"/>
<organism>
    <name type="scientific">Deinococcus radiodurans (strain ATCC 13939 / DSM 20539 / JCM 16871 / CCUG 27074 / LMG 4051 / NBRC 15346 / NCIMB 9279 / VKM B-1422 / R1)</name>
    <dbReference type="NCBI Taxonomy" id="243230"/>
    <lineage>
        <taxon>Bacteria</taxon>
        <taxon>Thermotogati</taxon>
        <taxon>Deinococcota</taxon>
        <taxon>Deinococci</taxon>
        <taxon>Deinococcales</taxon>
        <taxon>Deinococcaceae</taxon>
        <taxon>Deinococcus</taxon>
    </lineage>
</organism>
<keyword id="KW-0119">Carbohydrate metabolism</keyword>
<keyword id="KW-0320">Glycogen biosynthesis</keyword>
<keyword id="KW-0321">Glycogen metabolism</keyword>
<keyword id="KW-0328">Glycosyltransferase</keyword>
<keyword id="KW-1185">Reference proteome</keyword>
<keyword id="KW-0808">Transferase</keyword>
<protein>
    <recommendedName>
        <fullName evidence="1">1,4-alpha-glucan branching enzyme GlgB</fullName>
        <ecNumber evidence="1">2.4.1.18</ecNumber>
    </recommendedName>
    <alternativeName>
        <fullName evidence="1">1,4-alpha-D-glucan:1,4-alpha-D-glucan 6-glucosyl-transferase</fullName>
    </alternativeName>
    <alternativeName>
        <fullName evidence="1">Alpha-(1-&gt;4)-glucan branching enzyme</fullName>
    </alternativeName>
    <alternativeName>
        <fullName evidence="1">Glycogen branching enzyme</fullName>
        <shortName evidence="1">BE</shortName>
    </alternativeName>
</protein>
<dbReference type="EC" id="2.4.1.18" evidence="1"/>
<dbReference type="EMBL" id="AE000513">
    <property type="protein sequence ID" value="AAF11402.1"/>
    <property type="molecule type" value="Genomic_DNA"/>
</dbReference>
<dbReference type="PIR" id="D75345">
    <property type="entry name" value="D75345"/>
</dbReference>
<dbReference type="RefSeq" id="NP_295571.1">
    <property type="nucleotide sequence ID" value="NC_001263.1"/>
</dbReference>
<dbReference type="RefSeq" id="WP_010888483.1">
    <property type="nucleotide sequence ID" value="NC_001263.1"/>
</dbReference>
<dbReference type="SMR" id="Q9RTB7"/>
<dbReference type="FunCoup" id="Q9RTB7">
    <property type="interactions" value="336"/>
</dbReference>
<dbReference type="STRING" id="243230.DR_1848"/>
<dbReference type="CAZy" id="CBM48">
    <property type="family name" value="Carbohydrate-Binding Module Family 48"/>
</dbReference>
<dbReference type="CAZy" id="GH13">
    <property type="family name" value="Glycoside Hydrolase Family 13"/>
</dbReference>
<dbReference type="PaxDb" id="243230-DR_1848"/>
<dbReference type="EnsemblBacteria" id="AAF11402">
    <property type="protein sequence ID" value="AAF11402"/>
    <property type="gene ID" value="DR_1848"/>
</dbReference>
<dbReference type="GeneID" id="69518089"/>
<dbReference type="KEGG" id="dra:DR_1848"/>
<dbReference type="PATRIC" id="fig|243230.17.peg.2061"/>
<dbReference type="eggNOG" id="COG0296">
    <property type="taxonomic scope" value="Bacteria"/>
</dbReference>
<dbReference type="HOGENOM" id="CLU_004245_3_2_0"/>
<dbReference type="InParanoid" id="Q9RTB7"/>
<dbReference type="OrthoDB" id="9800174at2"/>
<dbReference type="BRENDA" id="2.4.1.18">
    <property type="organism ID" value="1856"/>
</dbReference>
<dbReference type="UniPathway" id="UPA00164"/>
<dbReference type="Proteomes" id="UP000002524">
    <property type="component" value="Chromosome 1"/>
</dbReference>
<dbReference type="GO" id="GO:0005737">
    <property type="term" value="C:cytoplasm"/>
    <property type="evidence" value="ECO:0000318"/>
    <property type="project" value="GO_Central"/>
</dbReference>
<dbReference type="GO" id="GO:0005829">
    <property type="term" value="C:cytosol"/>
    <property type="evidence" value="ECO:0000318"/>
    <property type="project" value="GO_Central"/>
</dbReference>
<dbReference type="GO" id="GO:0003844">
    <property type="term" value="F:1,4-alpha-glucan branching enzyme activity"/>
    <property type="evidence" value="ECO:0000318"/>
    <property type="project" value="GO_Central"/>
</dbReference>
<dbReference type="GO" id="GO:0043169">
    <property type="term" value="F:cation binding"/>
    <property type="evidence" value="ECO:0007669"/>
    <property type="project" value="InterPro"/>
</dbReference>
<dbReference type="GO" id="GO:0004553">
    <property type="term" value="F:hydrolase activity, hydrolyzing O-glycosyl compounds"/>
    <property type="evidence" value="ECO:0007669"/>
    <property type="project" value="InterPro"/>
</dbReference>
<dbReference type="GO" id="GO:0005978">
    <property type="term" value="P:glycogen biosynthetic process"/>
    <property type="evidence" value="ECO:0000318"/>
    <property type="project" value="GO_Central"/>
</dbReference>
<dbReference type="CDD" id="cd11322">
    <property type="entry name" value="AmyAc_Glg_BE"/>
    <property type="match status" value="1"/>
</dbReference>
<dbReference type="CDD" id="cd02855">
    <property type="entry name" value="E_set_GBE_prok_N"/>
    <property type="match status" value="1"/>
</dbReference>
<dbReference type="FunFam" id="2.60.40.1180:FF:000002">
    <property type="entry name" value="1,4-alpha-glucan branching enzyme GlgB"/>
    <property type="match status" value="1"/>
</dbReference>
<dbReference type="FunFam" id="3.20.20.80:FF:000003">
    <property type="entry name" value="1,4-alpha-glucan branching enzyme GlgB"/>
    <property type="match status" value="1"/>
</dbReference>
<dbReference type="Gene3D" id="3.20.20.80">
    <property type="entry name" value="Glycosidases"/>
    <property type="match status" value="1"/>
</dbReference>
<dbReference type="Gene3D" id="2.60.40.1180">
    <property type="entry name" value="Golgi alpha-mannosidase II"/>
    <property type="match status" value="1"/>
</dbReference>
<dbReference type="Gene3D" id="2.60.40.10">
    <property type="entry name" value="Immunoglobulins"/>
    <property type="match status" value="1"/>
</dbReference>
<dbReference type="HAMAP" id="MF_00685">
    <property type="entry name" value="GlgB"/>
    <property type="match status" value="1"/>
</dbReference>
<dbReference type="InterPro" id="IPR006048">
    <property type="entry name" value="A-amylase/branching_C"/>
</dbReference>
<dbReference type="InterPro" id="IPR037439">
    <property type="entry name" value="Branching_enzy"/>
</dbReference>
<dbReference type="InterPro" id="IPR006407">
    <property type="entry name" value="GlgB"/>
</dbReference>
<dbReference type="InterPro" id="IPR044143">
    <property type="entry name" value="GlgB_N_E_set_prok"/>
</dbReference>
<dbReference type="InterPro" id="IPR006047">
    <property type="entry name" value="Glyco_hydro_13_cat_dom"/>
</dbReference>
<dbReference type="InterPro" id="IPR004193">
    <property type="entry name" value="Glyco_hydro_13_N"/>
</dbReference>
<dbReference type="InterPro" id="IPR013780">
    <property type="entry name" value="Glyco_hydro_b"/>
</dbReference>
<dbReference type="InterPro" id="IPR017853">
    <property type="entry name" value="Glycoside_hydrolase_SF"/>
</dbReference>
<dbReference type="InterPro" id="IPR013783">
    <property type="entry name" value="Ig-like_fold"/>
</dbReference>
<dbReference type="NCBIfam" id="TIGR01515">
    <property type="entry name" value="branching_enzym"/>
    <property type="match status" value="1"/>
</dbReference>
<dbReference type="NCBIfam" id="NF003811">
    <property type="entry name" value="PRK05402.1"/>
    <property type="match status" value="1"/>
</dbReference>
<dbReference type="NCBIfam" id="NF008967">
    <property type="entry name" value="PRK12313.1"/>
    <property type="match status" value="1"/>
</dbReference>
<dbReference type="NCBIfam" id="NF011294">
    <property type="entry name" value="PRK14706.1"/>
    <property type="match status" value="1"/>
</dbReference>
<dbReference type="PANTHER" id="PTHR43651">
    <property type="entry name" value="1,4-ALPHA-GLUCAN-BRANCHING ENZYME"/>
    <property type="match status" value="1"/>
</dbReference>
<dbReference type="PANTHER" id="PTHR43651:SF3">
    <property type="entry name" value="1,4-ALPHA-GLUCAN-BRANCHING ENZYME"/>
    <property type="match status" value="1"/>
</dbReference>
<dbReference type="Pfam" id="PF00128">
    <property type="entry name" value="Alpha-amylase"/>
    <property type="match status" value="1"/>
</dbReference>
<dbReference type="Pfam" id="PF02806">
    <property type="entry name" value="Alpha-amylase_C"/>
    <property type="match status" value="1"/>
</dbReference>
<dbReference type="Pfam" id="PF02922">
    <property type="entry name" value="CBM_48"/>
    <property type="match status" value="1"/>
</dbReference>
<dbReference type="PIRSF" id="PIRSF000463">
    <property type="entry name" value="GlgB"/>
    <property type="match status" value="1"/>
</dbReference>
<dbReference type="SMART" id="SM00642">
    <property type="entry name" value="Aamy"/>
    <property type="match status" value="1"/>
</dbReference>
<dbReference type="SUPFAM" id="SSF51445">
    <property type="entry name" value="(Trans)glycosidases"/>
    <property type="match status" value="1"/>
</dbReference>
<dbReference type="SUPFAM" id="SSF51011">
    <property type="entry name" value="Glycosyl hydrolase domain"/>
    <property type="match status" value="1"/>
</dbReference>
<feature type="chain" id="PRO_0000188700" description="1,4-alpha-glucan branching enzyme GlgB">
    <location>
        <begin position="1"/>
        <end position="705"/>
    </location>
</feature>
<feature type="region of interest" description="Disordered" evidence="2">
    <location>
        <begin position="654"/>
        <end position="705"/>
    </location>
</feature>
<feature type="compositionally biased region" description="Basic and acidic residues" evidence="2">
    <location>
        <begin position="691"/>
        <end position="705"/>
    </location>
</feature>
<feature type="active site" description="Nucleophile" evidence="1">
    <location>
        <position position="309"/>
    </location>
</feature>
<feature type="active site" description="Proton donor" evidence="1">
    <location>
        <position position="360"/>
    </location>
</feature>